<organism>
    <name type="scientific">Staphylococcus aureus (strain JH9)</name>
    <dbReference type="NCBI Taxonomy" id="359786"/>
    <lineage>
        <taxon>Bacteria</taxon>
        <taxon>Bacillati</taxon>
        <taxon>Bacillota</taxon>
        <taxon>Bacilli</taxon>
        <taxon>Bacillales</taxon>
        <taxon>Staphylococcaceae</taxon>
        <taxon>Staphylococcus</taxon>
    </lineage>
</organism>
<gene>
    <name evidence="1" type="primary">folE2</name>
    <name type="ordered locus">SaurJH9_0589</name>
</gene>
<sequence>MTEFDLSTREGRWKHFGSVDPIEGTKPTTKNEMTDLQSTHKDFLFEIEEVGIKNLVYPVLVDQYQTAGTFSFSTSLTKDEKGINMSRIIESVEKHYDNGIELEFNTLYQVLRTLQTNMKQNAAGVDVSGKWFFDRYSPTTNIKAVGNADVTYGLAIDGDKVTRKELTIEATVTTLCPCSKEISEYSAHNQRGVVTVKTYINKDQNIVDDYKNKILDAMEANASSILYPILKRPDEKRVTERAYENPRFVEDLIRLIAADLVEFDWLDGFDIECRNEESIHQHDAFAKLKYRK</sequence>
<feature type="chain" id="PRO_1000087583" description="GTP cyclohydrolase FolE2">
    <location>
        <begin position="1"/>
        <end position="292"/>
    </location>
</feature>
<feature type="site" description="May be catalytically important" evidence="1">
    <location>
        <position position="176"/>
    </location>
</feature>
<reference key="1">
    <citation type="submission" date="2007-05" db="EMBL/GenBank/DDBJ databases">
        <title>Complete sequence of chromosome of Staphylococcus aureus subsp. aureus JH9.</title>
        <authorList>
            <consortium name="US DOE Joint Genome Institute"/>
            <person name="Copeland A."/>
            <person name="Lucas S."/>
            <person name="Lapidus A."/>
            <person name="Barry K."/>
            <person name="Detter J.C."/>
            <person name="Glavina del Rio T."/>
            <person name="Hammon N."/>
            <person name="Israni S."/>
            <person name="Pitluck S."/>
            <person name="Chain P."/>
            <person name="Malfatti S."/>
            <person name="Shin M."/>
            <person name="Vergez L."/>
            <person name="Schmutz J."/>
            <person name="Larimer F."/>
            <person name="Land M."/>
            <person name="Hauser L."/>
            <person name="Kyrpides N."/>
            <person name="Kim E."/>
            <person name="Tomasz A."/>
            <person name="Richardson P."/>
        </authorList>
    </citation>
    <scope>NUCLEOTIDE SEQUENCE [LARGE SCALE GENOMIC DNA]</scope>
    <source>
        <strain>JH9</strain>
    </source>
</reference>
<accession>A5IQC0</accession>
<evidence type="ECO:0000255" key="1">
    <source>
        <dbReference type="HAMAP-Rule" id="MF_01527"/>
    </source>
</evidence>
<keyword id="KW-0378">Hydrolase</keyword>
<name>GCH4_STAA9</name>
<proteinExistence type="inferred from homology"/>
<dbReference type="EC" id="3.5.4.16" evidence="1"/>
<dbReference type="EMBL" id="CP000703">
    <property type="protein sequence ID" value="ABQ48393.1"/>
    <property type="molecule type" value="Genomic_DNA"/>
</dbReference>
<dbReference type="RefSeq" id="WP_000134236.1">
    <property type="nucleotide sequence ID" value="NC_009487.1"/>
</dbReference>
<dbReference type="SMR" id="A5IQC0"/>
<dbReference type="KEGG" id="saj:SaurJH9_0589"/>
<dbReference type="HOGENOM" id="CLU_062816_1_1_9"/>
<dbReference type="UniPathway" id="UPA00848">
    <property type="reaction ID" value="UER00151"/>
</dbReference>
<dbReference type="GO" id="GO:0003934">
    <property type="term" value="F:GTP cyclohydrolase I activity"/>
    <property type="evidence" value="ECO:0007669"/>
    <property type="project" value="UniProtKB-UniRule"/>
</dbReference>
<dbReference type="GO" id="GO:0046654">
    <property type="term" value="P:tetrahydrofolate biosynthetic process"/>
    <property type="evidence" value="ECO:0007669"/>
    <property type="project" value="UniProtKB-UniRule"/>
</dbReference>
<dbReference type="Gene3D" id="3.10.270.10">
    <property type="entry name" value="Urate Oxidase"/>
    <property type="match status" value="1"/>
</dbReference>
<dbReference type="HAMAP" id="MF_01527_B">
    <property type="entry name" value="GTP_cyclohydrol_B"/>
    <property type="match status" value="1"/>
</dbReference>
<dbReference type="InterPro" id="IPR022838">
    <property type="entry name" value="GTP_cyclohydrolase_FolE2"/>
</dbReference>
<dbReference type="InterPro" id="IPR003801">
    <property type="entry name" value="GTP_cyclohydrolase_FolE2/MptA"/>
</dbReference>
<dbReference type="NCBIfam" id="NF010200">
    <property type="entry name" value="PRK13674.1-1"/>
    <property type="match status" value="1"/>
</dbReference>
<dbReference type="PANTHER" id="PTHR36445">
    <property type="entry name" value="GTP CYCLOHYDROLASE MPTA"/>
    <property type="match status" value="1"/>
</dbReference>
<dbReference type="PANTHER" id="PTHR36445:SF1">
    <property type="entry name" value="GTP CYCLOHYDROLASE MPTA"/>
    <property type="match status" value="1"/>
</dbReference>
<dbReference type="Pfam" id="PF02649">
    <property type="entry name" value="GCHY-1"/>
    <property type="match status" value="1"/>
</dbReference>
<comment type="function">
    <text evidence="1">Converts GTP to 7,8-dihydroneopterin triphosphate.</text>
</comment>
<comment type="catalytic activity">
    <reaction evidence="1">
        <text>GTP + H2O = 7,8-dihydroneopterin 3'-triphosphate + formate + H(+)</text>
        <dbReference type="Rhea" id="RHEA:17473"/>
        <dbReference type="ChEBI" id="CHEBI:15377"/>
        <dbReference type="ChEBI" id="CHEBI:15378"/>
        <dbReference type="ChEBI" id="CHEBI:15740"/>
        <dbReference type="ChEBI" id="CHEBI:37565"/>
        <dbReference type="ChEBI" id="CHEBI:58462"/>
        <dbReference type="EC" id="3.5.4.16"/>
    </reaction>
</comment>
<comment type="pathway">
    <text evidence="1">Cofactor biosynthesis; 7,8-dihydroneopterin triphosphate biosynthesis; 7,8-dihydroneopterin triphosphate from GTP: step 1/1.</text>
</comment>
<comment type="similarity">
    <text evidence="1">Belongs to the GTP cyclohydrolase IV family.</text>
</comment>
<protein>
    <recommendedName>
        <fullName evidence="1">GTP cyclohydrolase FolE2</fullName>
        <ecNumber evidence="1">3.5.4.16</ecNumber>
    </recommendedName>
</protein>